<sequence length="330" mass="35783">MALPEFTMRQLLEAGVHFGHQSHRWNPKMADYIFGARNNIHIIDLAQTVPLLHTALQAVSDTVAKGGRILFVGTKRQAQDNVADAAKRCAQYFVNSRWLGGTLTNWKTISASIKRLRHLDEVLSSGEANSYTKKERLTLQRERDKLDRSLGGIKDMGGLPDMIFVIDTNKEDIAIQEAQRLNIPVAAIVDTNCDPKGITYVVPGNDDAGRAISLYCDLIARAAIDGISRAQGELGIDIGASAAPLEEELPAATAASTFQGLPGPRGTADDLKKLTGVSGAIEKKLNDLGIFHFWQLAELDHDTAHQIGEEVGLPSRADAWVAQAKSLADA</sequence>
<name>RS2_BRASB</name>
<feature type="chain" id="PRO_1000003901" description="Small ribosomal subunit protein uS2">
    <location>
        <begin position="1"/>
        <end position="330"/>
    </location>
</feature>
<accession>A5EK55</accession>
<keyword id="KW-1185">Reference proteome</keyword>
<keyword id="KW-0687">Ribonucleoprotein</keyword>
<keyword id="KW-0689">Ribosomal protein</keyword>
<dbReference type="EMBL" id="CP000494">
    <property type="protein sequence ID" value="ABQ36549.1"/>
    <property type="molecule type" value="Genomic_DNA"/>
</dbReference>
<dbReference type="RefSeq" id="WP_012044545.1">
    <property type="nucleotide sequence ID" value="NC_009485.1"/>
</dbReference>
<dbReference type="SMR" id="A5EK55"/>
<dbReference type="STRING" id="288000.BBta_4517"/>
<dbReference type="KEGG" id="bbt:BBta_4517"/>
<dbReference type="eggNOG" id="COG0052">
    <property type="taxonomic scope" value="Bacteria"/>
</dbReference>
<dbReference type="HOGENOM" id="CLU_040318_2_1_5"/>
<dbReference type="OrthoDB" id="9808036at2"/>
<dbReference type="Proteomes" id="UP000000246">
    <property type="component" value="Chromosome"/>
</dbReference>
<dbReference type="GO" id="GO:0022627">
    <property type="term" value="C:cytosolic small ribosomal subunit"/>
    <property type="evidence" value="ECO:0007669"/>
    <property type="project" value="TreeGrafter"/>
</dbReference>
<dbReference type="GO" id="GO:0003735">
    <property type="term" value="F:structural constituent of ribosome"/>
    <property type="evidence" value="ECO:0007669"/>
    <property type="project" value="InterPro"/>
</dbReference>
<dbReference type="GO" id="GO:0006412">
    <property type="term" value="P:translation"/>
    <property type="evidence" value="ECO:0007669"/>
    <property type="project" value="UniProtKB-UniRule"/>
</dbReference>
<dbReference type="CDD" id="cd01425">
    <property type="entry name" value="RPS2"/>
    <property type="match status" value="1"/>
</dbReference>
<dbReference type="FunFam" id="1.10.287.610:FF:000004">
    <property type="entry name" value="30S ribosomal protein S2"/>
    <property type="match status" value="1"/>
</dbReference>
<dbReference type="Gene3D" id="3.40.50.10490">
    <property type="entry name" value="Glucose-6-phosphate isomerase like protein, domain 1"/>
    <property type="match status" value="1"/>
</dbReference>
<dbReference type="Gene3D" id="1.10.287.610">
    <property type="entry name" value="Helix hairpin bin"/>
    <property type="match status" value="1"/>
</dbReference>
<dbReference type="HAMAP" id="MF_00291_B">
    <property type="entry name" value="Ribosomal_uS2_B"/>
    <property type="match status" value="1"/>
</dbReference>
<dbReference type="InterPro" id="IPR001865">
    <property type="entry name" value="Ribosomal_uS2"/>
</dbReference>
<dbReference type="InterPro" id="IPR005706">
    <property type="entry name" value="Ribosomal_uS2_bac/mit/plastid"/>
</dbReference>
<dbReference type="InterPro" id="IPR018130">
    <property type="entry name" value="Ribosomal_uS2_CS"/>
</dbReference>
<dbReference type="InterPro" id="IPR023591">
    <property type="entry name" value="Ribosomal_uS2_flav_dom_sf"/>
</dbReference>
<dbReference type="NCBIfam" id="NF008966">
    <property type="entry name" value="PRK12311.1"/>
    <property type="match status" value="1"/>
</dbReference>
<dbReference type="NCBIfam" id="TIGR01011">
    <property type="entry name" value="rpsB_bact"/>
    <property type="match status" value="1"/>
</dbReference>
<dbReference type="PANTHER" id="PTHR12534">
    <property type="entry name" value="30S RIBOSOMAL PROTEIN S2 PROKARYOTIC AND ORGANELLAR"/>
    <property type="match status" value="1"/>
</dbReference>
<dbReference type="PANTHER" id="PTHR12534:SF0">
    <property type="entry name" value="SMALL RIBOSOMAL SUBUNIT PROTEIN US2M"/>
    <property type="match status" value="1"/>
</dbReference>
<dbReference type="Pfam" id="PF00318">
    <property type="entry name" value="Ribosomal_S2"/>
    <property type="match status" value="1"/>
</dbReference>
<dbReference type="PRINTS" id="PR00395">
    <property type="entry name" value="RIBOSOMALS2"/>
</dbReference>
<dbReference type="SUPFAM" id="SSF52313">
    <property type="entry name" value="Ribosomal protein S2"/>
    <property type="match status" value="1"/>
</dbReference>
<dbReference type="PROSITE" id="PS00962">
    <property type="entry name" value="RIBOSOMAL_S2_1"/>
    <property type="match status" value="1"/>
</dbReference>
<dbReference type="PROSITE" id="PS00963">
    <property type="entry name" value="RIBOSOMAL_S2_2"/>
    <property type="match status" value="1"/>
</dbReference>
<comment type="similarity">
    <text evidence="1">Belongs to the universal ribosomal protein uS2 family.</text>
</comment>
<organism>
    <name type="scientific">Bradyrhizobium sp. (strain BTAi1 / ATCC BAA-1182)</name>
    <dbReference type="NCBI Taxonomy" id="288000"/>
    <lineage>
        <taxon>Bacteria</taxon>
        <taxon>Pseudomonadati</taxon>
        <taxon>Pseudomonadota</taxon>
        <taxon>Alphaproteobacteria</taxon>
        <taxon>Hyphomicrobiales</taxon>
        <taxon>Nitrobacteraceae</taxon>
        <taxon>Bradyrhizobium</taxon>
    </lineage>
</organism>
<evidence type="ECO:0000255" key="1">
    <source>
        <dbReference type="HAMAP-Rule" id="MF_00291"/>
    </source>
</evidence>
<evidence type="ECO:0000305" key="2"/>
<protein>
    <recommendedName>
        <fullName evidence="1">Small ribosomal subunit protein uS2</fullName>
    </recommendedName>
    <alternativeName>
        <fullName evidence="2">30S ribosomal protein S2</fullName>
    </alternativeName>
</protein>
<reference key="1">
    <citation type="journal article" date="2007" name="Science">
        <title>Legumes symbioses: absence of nod genes in photosynthetic bradyrhizobia.</title>
        <authorList>
            <person name="Giraud E."/>
            <person name="Moulin L."/>
            <person name="Vallenet D."/>
            <person name="Barbe V."/>
            <person name="Cytryn E."/>
            <person name="Avarre J.-C."/>
            <person name="Jaubert M."/>
            <person name="Simon D."/>
            <person name="Cartieaux F."/>
            <person name="Prin Y."/>
            <person name="Bena G."/>
            <person name="Hannibal L."/>
            <person name="Fardoux J."/>
            <person name="Kojadinovic M."/>
            <person name="Vuillet L."/>
            <person name="Lajus A."/>
            <person name="Cruveiller S."/>
            <person name="Rouy Z."/>
            <person name="Mangenot S."/>
            <person name="Segurens B."/>
            <person name="Dossat C."/>
            <person name="Franck W.L."/>
            <person name="Chang W.-S."/>
            <person name="Saunders E."/>
            <person name="Bruce D."/>
            <person name="Richardson P."/>
            <person name="Normand P."/>
            <person name="Dreyfus B."/>
            <person name="Pignol D."/>
            <person name="Stacey G."/>
            <person name="Emerich D."/>
            <person name="Vermeglio A."/>
            <person name="Medigue C."/>
            <person name="Sadowsky M."/>
        </authorList>
    </citation>
    <scope>NUCLEOTIDE SEQUENCE [LARGE SCALE GENOMIC DNA]</scope>
    <source>
        <strain>BTAi1 / ATCC BAA-1182</strain>
    </source>
</reference>
<gene>
    <name evidence="1" type="primary">rpsB</name>
    <name type="ordered locus">BBta_4517</name>
</gene>
<proteinExistence type="inferred from homology"/>